<gene>
    <name evidence="1" type="primary">lpxC</name>
    <name type="ordered locus">swp_2236</name>
</gene>
<reference key="1">
    <citation type="journal article" date="2008" name="PLoS ONE">
        <title>Environmental adaptation: genomic analysis of the piezotolerant and psychrotolerant deep-sea iron reducing bacterium Shewanella piezotolerans WP3.</title>
        <authorList>
            <person name="Wang F."/>
            <person name="Wang J."/>
            <person name="Jian H."/>
            <person name="Zhang B."/>
            <person name="Li S."/>
            <person name="Wang F."/>
            <person name="Zeng X."/>
            <person name="Gao L."/>
            <person name="Bartlett D.H."/>
            <person name="Yu J."/>
            <person name="Hu S."/>
            <person name="Xiao X."/>
        </authorList>
    </citation>
    <scope>NUCLEOTIDE SEQUENCE [LARGE SCALE GENOMIC DNA]</scope>
    <source>
        <strain>WP3 / JCM 13877</strain>
    </source>
</reference>
<protein>
    <recommendedName>
        <fullName evidence="1">UDP-3-O-acyl-N-acetylglucosamine deacetylase</fullName>
        <shortName evidence="1">UDP-3-O-acyl-GlcNAc deacetylase</shortName>
        <ecNumber evidence="1">3.5.1.108</ecNumber>
    </recommendedName>
    <alternativeName>
        <fullName evidence="1">UDP-3-O-[R-3-hydroxymyristoyl]-N-acetylglucosamine deacetylase</fullName>
    </alternativeName>
</protein>
<feature type="chain" id="PRO_1000122821" description="UDP-3-O-acyl-N-acetylglucosamine deacetylase">
    <location>
        <begin position="1"/>
        <end position="306"/>
    </location>
</feature>
<feature type="active site" description="Proton donor" evidence="1">
    <location>
        <position position="265"/>
    </location>
</feature>
<feature type="binding site" evidence="1">
    <location>
        <position position="79"/>
    </location>
    <ligand>
        <name>Zn(2+)</name>
        <dbReference type="ChEBI" id="CHEBI:29105"/>
    </ligand>
</feature>
<feature type="binding site" evidence="1">
    <location>
        <position position="238"/>
    </location>
    <ligand>
        <name>Zn(2+)</name>
        <dbReference type="ChEBI" id="CHEBI:29105"/>
    </ligand>
</feature>
<feature type="binding site" evidence="1">
    <location>
        <position position="242"/>
    </location>
    <ligand>
        <name>Zn(2+)</name>
        <dbReference type="ChEBI" id="CHEBI:29105"/>
    </ligand>
</feature>
<accession>B8CNL6</accession>
<dbReference type="EC" id="3.5.1.108" evidence="1"/>
<dbReference type="EMBL" id="CP000472">
    <property type="protein sequence ID" value="ACJ28985.1"/>
    <property type="molecule type" value="Genomic_DNA"/>
</dbReference>
<dbReference type="RefSeq" id="WP_020912346.1">
    <property type="nucleotide sequence ID" value="NC_011566.1"/>
</dbReference>
<dbReference type="SMR" id="B8CNL6"/>
<dbReference type="STRING" id="225849.swp_2236"/>
<dbReference type="KEGG" id="swp:swp_2236"/>
<dbReference type="eggNOG" id="COG0774">
    <property type="taxonomic scope" value="Bacteria"/>
</dbReference>
<dbReference type="HOGENOM" id="CLU_046528_1_0_6"/>
<dbReference type="OrthoDB" id="9802746at2"/>
<dbReference type="UniPathway" id="UPA00359">
    <property type="reaction ID" value="UER00478"/>
</dbReference>
<dbReference type="Proteomes" id="UP000000753">
    <property type="component" value="Chromosome"/>
</dbReference>
<dbReference type="GO" id="GO:0016020">
    <property type="term" value="C:membrane"/>
    <property type="evidence" value="ECO:0007669"/>
    <property type="project" value="GOC"/>
</dbReference>
<dbReference type="GO" id="GO:0046872">
    <property type="term" value="F:metal ion binding"/>
    <property type="evidence" value="ECO:0007669"/>
    <property type="project" value="UniProtKB-KW"/>
</dbReference>
<dbReference type="GO" id="GO:0103117">
    <property type="term" value="F:UDP-3-O-acyl-N-acetylglucosamine deacetylase activity"/>
    <property type="evidence" value="ECO:0007669"/>
    <property type="project" value="UniProtKB-UniRule"/>
</dbReference>
<dbReference type="GO" id="GO:0009245">
    <property type="term" value="P:lipid A biosynthetic process"/>
    <property type="evidence" value="ECO:0007669"/>
    <property type="project" value="UniProtKB-UniRule"/>
</dbReference>
<dbReference type="Gene3D" id="3.30.230.20">
    <property type="entry name" value="lpxc deacetylase, domain 1"/>
    <property type="match status" value="1"/>
</dbReference>
<dbReference type="Gene3D" id="3.30.1700.10">
    <property type="entry name" value="lpxc deacetylase, domain 2"/>
    <property type="match status" value="1"/>
</dbReference>
<dbReference type="HAMAP" id="MF_00388">
    <property type="entry name" value="LpxC"/>
    <property type="match status" value="1"/>
</dbReference>
<dbReference type="InterPro" id="IPR020568">
    <property type="entry name" value="Ribosomal_Su5_D2-typ_SF"/>
</dbReference>
<dbReference type="InterPro" id="IPR004463">
    <property type="entry name" value="UDP-acyl_GlcNac_deAcase"/>
</dbReference>
<dbReference type="InterPro" id="IPR011334">
    <property type="entry name" value="UDP-acyl_GlcNac_deAcase_C"/>
</dbReference>
<dbReference type="InterPro" id="IPR015870">
    <property type="entry name" value="UDP-acyl_N-AcGlcN_deAcase_N"/>
</dbReference>
<dbReference type="NCBIfam" id="TIGR00325">
    <property type="entry name" value="lpxC"/>
    <property type="match status" value="1"/>
</dbReference>
<dbReference type="PANTHER" id="PTHR33694">
    <property type="entry name" value="UDP-3-O-ACYL-N-ACETYLGLUCOSAMINE DEACETYLASE 1, MITOCHONDRIAL-RELATED"/>
    <property type="match status" value="1"/>
</dbReference>
<dbReference type="PANTHER" id="PTHR33694:SF1">
    <property type="entry name" value="UDP-3-O-ACYL-N-ACETYLGLUCOSAMINE DEACETYLASE 1, MITOCHONDRIAL-RELATED"/>
    <property type="match status" value="1"/>
</dbReference>
<dbReference type="Pfam" id="PF03331">
    <property type="entry name" value="LpxC"/>
    <property type="match status" value="1"/>
</dbReference>
<dbReference type="SUPFAM" id="SSF54211">
    <property type="entry name" value="Ribosomal protein S5 domain 2-like"/>
    <property type="match status" value="2"/>
</dbReference>
<comment type="function">
    <text evidence="1">Catalyzes the hydrolysis of UDP-3-O-myristoyl-N-acetylglucosamine to form UDP-3-O-myristoylglucosamine and acetate, the committed step in lipid A biosynthesis.</text>
</comment>
<comment type="catalytic activity">
    <reaction evidence="1">
        <text>a UDP-3-O-[(3R)-3-hydroxyacyl]-N-acetyl-alpha-D-glucosamine + H2O = a UDP-3-O-[(3R)-3-hydroxyacyl]-alpha-D-glucosamine + acetate</text>
        <dbReference type="Rhea" id="RHEA:67816"/>
        <dbReference type="ChEBI" id="CHEBI:15377"/>
        <dbReference type="ChEBI" id="CHEBI:30089"/>
        <dbReference type="ChEBI" id="CHEBI:137740"/>
        <dbReference type="ChEBI" id="CHEBI:173225"/>
        <dbReference type="EC" id="3.5.1.108"/>
    </reaction>
</comment>
<comment type="cofactor">
    <cofactor evidence="1">
        <name>Zn(2+)</name>
        <dbReference type="ChEBI" id="CHEBI:29105"/>
    </cofactor>
</comment>
<comment type="pathway">
    <text evidence="1">Glycolipid biosynthesis; lipid IV(A) biosynthesis; lipid IV(A) from (3R)-3-hydroxytetradecanoyl-[acyl-carrier-protein] and UDP-N-acetyl-alpha-D-glucosamine: step 2/6.</text>
</comment>
<comment type="similarity">
    <text evidence="1">Belongs to the LpxC family.</text>
</comment>
<sequence length="306" mass="33651">MIFQRTVKEMVKTTGVGLHSGNKVTLIIKPAPVNTGIMLVRTDLSPAVEIPAVAEQVRETTMCTALVNDDGVRISTIEHLFAALAGLGIDNAIIEVDAPEIPIMDGSASPFVFLLQSVGIEEQAAAKKYIKITKPIRVEDGDKWAELKPFKGFRVDFAIDFNHPEIARSQQHMVMDFSSSAFVKDISRARTFGFMRDIEYLRANNLALGGSMENAVVLDEYRVLNPDGLRYEDEFVKHKILDAFGDLYVAGHAIVGEFCAYKTGHALNNQLVRAMLAQQDAWEIVSFEKEADAPVSFSVPSGAVFA</sequence>
<evidence type="ECO:0000255" key="1">
    <source>
        <dbReference type="HAMAP-Rule" id="MF_00388"/>
    </source>
</evidence>
<keyword id="KW-0378">Hydrolase</keyword>
<keyword id="KW-0441">Lipid A biosynthesis</keyword>
<keyword id="KW-0444">Lipid biosynthesis</keyword>
<keyword id="KW-0443">Lipid metabolism</keyword>
<keyword id="KW-0479">Metal-binding</keyword>
<keyword id="KW-0862">Zinc</keyword>
<proteinExistence type="inferred from homology"/>
<organism>
    <name type="scientific">Shewanella piezotolerans (strain WP3 / JCM 13877)</name>
    <dbReference type="NCBI Taxonomy" id="225849"/>
    <lineage>
        <taxon>Bacteria</taxon>
        <taxon>Pseudomonadati</taxon>
        <taxon>Pseudomonadota</taxon>
        <taxon>Gammaproteobacteria</taxon>
        <taxon>Alteromonadales</taxon>
        <taxon>Shewanellaceae</taxon>
        <taxon>Shewanella</taxon>
    </lineage>
</organism>
<name>LPXC_SHEPW</name>